<gene>
    <name type="primary">Dnajb6</name>
    <name type="synonym">Hsj2</name>
    <name type="synonym">Mrj</name>
</gene>
<keyword id="KW-0025">Alternative splicing</keyword>
<keyword id="KW-0143">Chaperone</keyword>
<keyword id="KW-0963">Cytoplasm</keyword>
<keyword id="KW-0488">Methylation</keyword>
<keyword id="KW-0539">Nucleus</keyword>
<keyword id="KW-1185">Reference proteome</keyword>
<name>DNJB6_MOUSE</name>
<reference key="1">
    <citation type="journal article" date="2000" name="Cell Stress Chaperones">
        <title>Mammalian HSP40/DNAJ homologs: cloning of novel cDNAs and a proposal for their classification and nomenclature.</title>
        <authorList>
            <person name="Ohtsuka K."/>
            <person name="Hata M."/>
        </authorList>
    </citation>
    <scope>NUCLEOTIDE SEQUENCE [MRNA] (ISOFORM B)</scope>
    <source>
        <strain>C57BL/6J</strain>
        <tissue>Embryo</tissue>
    </source>
</reference>
<reference key="2">
    <citation type="submission" date="1998-05" db="EMBL/GenBank/DDBJ databases">
        <authorList>
            <person name="Hunter P.J."/>
            <person name="Swanson B.J."/>
            <person name="Haendel M."/>
            <person name="Lyons G.E."/>
            <person name="Cross J.C."/>
        </authorList>
    </citation>
    <scope>NUCLEOTIDE SEQUENCE [MRNA] (ISOFORM B)</scope>
    <source>
        <strain>129</strain>
        <tissue>Trophoblast</tissue>
    </source>
</reference>
<reference key="3">
    <citation type="journal article" date="2005" name="Science">
        <title>The transcriptional landscape of the mammalian genome.</title>
        <authorList>
            <person name="Carninci P."/>
            <person name="Kasukawa T."/>
            <person name="Katayama S."/>
            <person name="Gough J."/>
            <person name="Frith M.C."/>
            <person name="Maeda N."/>
            <person name="Oyama R."/>
            <person name="Ravasi T."/>
            <person name="Lenhard B."/>
            <person name="Wells C."/>
            <person name="Kodzius R."/>
            <person name="Shimokawa K."/>
            <person name="Bajic V.B."/>
            <person name="Brenner S.E."/>
            <person name="Batalov S."/>
            <person name="Forrest A.R."/>
            <person name="Zavolan M."/>
            <person name="Davis M.J."/>
            <person name="Wilming L.G."/>
            <person name="Aidinis V."/>
            <person name="Allen J.E."/>
            <person name="Ambesi-Impiombato A."/>
            <person name="Apweiler R."/>
            <person name="Aturaliya R.N."/>
            <person name="Bailey T.L."/>
            <person name="Bansal M."/>
            <person name="Baxter L."/>
            <person name="Beisel K.W."/>
            <person name="Bersano T."/>
            <person name="Bono H."/>
            <person name="Chalk A.M."/>
            <person name="Chiu K.P."/>
            <person name="Choudhary V."/>
            <person name="Christoffels A."/>
            <person name="Clutterbuck D.R."/>
            <person name="Crowe M.L."/>
            <person name="Dalla E."/>
            <person name="Dalrymple B.P."/>
            <person name="de Bono B."/>
            <person name="Della Gatta G."/>
            <person name="di Bernardo D."/>
            <person name="Down T."/>
            <person name="Engstrom P."/>
            <person name="Fagiolini M."/>
            <person name="Faulkner G."/>
            <person name="Fletcher C.F."/>
            <person name="Fukushima T."/>
            <person name="Furuno M."/>
            <person name="Futaki S."/>
            <person name="Gariboldi M."/>
            <person name="Georgii-Hemming P."/>
            <person name="Gingeras T.R."/>
            <person name="Gojobori T."/>
            <person name="Green R.E."/>
            <person name="Gustincich S."/>
            <person name="Harbers M."/>
            <person name="Hayashi Y."/>
            <person name="Hensch T.K."/>
            <person name="Hirokawa N."/>
            <person name="Hill D."/>
            <person name="Huminiecki L."/>
            <person name="Iacono M."/>
            <person name="Ikeo K."/>
            <person name="Iwama A."/>
            <person name="Ishikawa T."/>
            <person name="Jakt M."/>
            <person name="Kanapin A."/>
            <person name="Katoh M."/>
            <person name="Kawasawa Y."/>
            <person name="Kelso J."/>
            <person name="Kitamura H."/>
            <person name="Kitano H."/>
            <person name="Kollias G."/>
            <person name="Krishnan S.P."/>
            <person name="Kruger A."/>
            <person name="Kummerfeld S.K."/>
            <person name="Kurochkin I.V."/>
            <person name="Lareau L.F."/>
            <person name="Lazarevic D."/>
            <person name="Lipovich L."/>
            <person name="Liu J."/>
            <person name="Liuni S."/>
            <person name="McWilliam S."/>
            <person name="Madan Babu M."/>
            <person name="Madera M."/>
            <person name="Marchionni L."/>
            <person name="Matsuda H."/>
            <person name="Matsuzawa S."/>
            <person name="Miki H."/>
            <person name="Mignone F."/>
            <person name="Miyake S."/>
            <person name="Morris K."/>
            <person name="Mottagui-Tabar S."/>
            <person name="Mulder N."/>
            <person name="Nakano N."/>
            <person name="Nakauchi H."/>
            <person name="Ng P."/>
            <person name="Nilsson R."/>
            <person name="Nishiguchi S."/>
            <person name="Nishikawa S."/>
            <person name="Nori F."/>
            <person name="Ohara O."/>
            <person name="Okazaki Y."/>
            <person name="Orlando V."/>
            <person name="Pang K.C."/>
            <person name="Pavan W.J."/>
            <person name="Pavesi G."/>
            <person name="Pesole G."/>
            <person name="Petrovsky N."/>
            <person name="Piazza S."/>
            <person name="Reed J."/>
            <person name="Reid J.F."/>
            <person name="Ring B.Z."/>
            <person name="Ringwald M."/>
            <person name="Rost B."/>
            <person name="Ruan Y."/>
            <person name="Salzberg S.L."/>
            <person name="Sandelin A."/>
            <person name="Schneider C."/>
            <person name="Schoenbach C."/>
            <person name="Sekiguchi K."/>
            <person name="Semple C.A."/>
            <person name="Seno S."/>
            <person name="Sessa L."/>
            <person name="Sheng Y."/>
            <person name="Shibata Y."/>
            <person name="Shimada H."/>
            <person name="Shimada K."/>
            <person name="Silva D."/>
            <person name="Sinclair B."/>
            <person name="Sperling S."/>
            <person name="Stupka E."/>
            <person name="Sugiura K."/>
            <person name="Sultana R."/>
            <person name="Takenaka Y."/>
            <person name="Taki K."/>
            <person name="Tammoja K."/>
            <person name="Tan S.L."/>
            <person name="Tang S."/>
            <person name="Taylor M.S."/>
            <person name="Tegner J."/>
            <person name="Teichmann S.A."/>
            <person name="Ueda H.R."/>
            <person name="van Nimwegen E."/>
            <person name="Verardo R."/>
            <person name="Wei C.L."/>
            <person name="Yagi K."/>
            <person name="Yamanishi H."/>
            <person name="Zabarovsky E."/>
            <person name="Zhu S."/>
            <person name="Zimmer A."/>
            <person name="Hide W."/>
            <person name="Bult C."/>
            <person name="Grimmond S.M."/>
            <person name="Teasdale R.D."/>
            <person name="Liu E.T."/>
            <person name="Brusic V."/>
            <person name="Quackenbush J."/>
            <person name="Wahlestedt C."/>
            <person name="Mattick J.S."/>
            <person name="Hume D.A."/>
            <person name="Kai C."/>
            <person name="Sasaki D."/>
            <person name="Tomaru Y."/>
            <person name="Fukuda S."/>
            <person name="Kanamori-Katayama M."/>
            <person name="Suzuki M."/>
            <person name="Aoki J."/>
            <person name="Arakawa T."/>
            <person name="Iida J."/>
            <person name="Imamura K."/>
            <person name="Itoh M."/>
            <person name="Kato T."/>
            <person name="Kawaji H."/>
            <person name="Kawagashira N."/>
            <person name="Kawashima T."/>
            <person name="Kojima M."/>
            <person name="Kondo S."/>
            <person name="Konno H."/>
            <person name="Nakano K."/>
            <person name="Ninomiya N."/>
            <person name="Nishio T."/>
            <person name="Okada M."/>
            <person name="Plessy C."/>
            <person name="Shibata K."/>
            <person name="Shiraki T."/>
            <person name="Suzuki S."/>
            <person name="Tagami M."/>
            <person name="Waki K."/>
            <person name="Watahiki A."/>
            <person name="Okamura-Oho Y."/>
            <person name="Suzuki H."/>
            <person name="Kawai J."/>
            <person name="Hayashizaki Y."/>
        </authorList>
    </citation>
    <scope>NUCLEOTIDE SEQUENCE [LARGE SCALE MRNA] (ISOFORMS A AND B)</scope>
    <source>
        <strain>BALB/cJ</strain>
        <strain>C57BL/6J</strain>
        <strain>NOD</strain>
        <tissue>B-cell</tissue>
        <tissue>Bone marrow</tissue>
        <tissue>Embryo</tissue>
        <tissue>Embryonic stomach</tissue>
        <tissue>Embryonic testis</tissue>
        <tissue>Thymus</tissue>
    </source>
</reference>
<reference key="4">
    <citation type="journal article" date="2004" name="Genome Res.">
        <title>The status, quality, and expansion of the NIH full-length cDNA project: the Mammalian Gene Collection (MGC).</title>
        <authorList>
            <consortium name="The MGC Project Team"/>
        </authorList>
    </citation>
    <scope>NUCLEOTIDE SEQUENCE [LARGE SCALE MRNA] (ISOFORM B)</scope>
    <source>
        <strain>C57BL/6J</strain>
        <strain>FVB/N</strain>
        <tissue>Eye</tissue>
        <tissue>Mammary gland</tissue>
    </source>
</reference>
<reference key="5">
    <citation type="journal article" date="2008" name="Dev. Dyn.">
        <title>Impaired placental trophoblast lineage differentiation in Alkbh1(-/-) mice.</title>
        <authorList>
            <person name="Pan Z."/>
            <person name="Sikandar S."/>
            <person name="Witherspoon M."/>
            <person name="Dizon D."/>
            <person name="Nguyen T."/>
            <person name="Benirschke K."/>
            <person name="Wiley C."/>
            <person name="Vrana P."/>
            <person name="Lipkin S.M."/>
        </authorList>
    </citation>
    <scope>INTERACTION WITH ALKBH1</scope>
</reference>
<reference key="6">
    <citation type="journal article" date="2010" name="Cell">
        <title>A tissue-specific atlas of mouse protein phosphorylation and expression.</title>
        <authorList>
            <person name="Huttlin E.L."/>
            <person name="Jedrychowski M.P."/>
            <person name="Elias J.E."/>
            <person name="Goswami T."/>
            <person name="Rad R."/>
            <person name="Beausoleil S.A."/>
            <person name="Villen J."/>
            <person name="Haas W."/>
            <person name="Sowa M.E."/>
            <person name="Gygi S.P."/>
        </authorList>
    </citation>
    <scope>IDENTIFICATION BY MASS SPECTROMETRY [LARGE SCALE ANALYSIS]</scope>
    <source>
        <tissue>Brain</tissue>
        <tissue>Kidney</tissue>
        <tissue>Liver</tissue>
        <tissue>Lung</tissue>
        <tissue>Spleen</tissue>
        <tissue>Testis</tissue>
    </source>
</reference>
<reference key="7">
    <citation type="journal article" date="2014" name="Mol. Cell. Proteomics">
        <title>Immunoaffinity enrichment and mass spectrometry analysis of protein methylation.</title>
        <authorList>
            <person name="Guo A."/>
            <person name="Gu H."/>
            <person name="Zhou J."/>
            <person name="Mulhern D."/>
            <person name="Wang Y."/>
            <person name="Lee K.A."/>
            <person name="Yang V."/>
            <person name="Aguiar M."/>
            <person name="Kornhauser J."/>
            <person name="Jia X."/>
            <person name="Ren J."/>
            <person name="Beausoleil S.A."/>
            <person name="Silva J.C."/>
            <person name="Vemulapalli V."/>
            <person name="Bedford M.T."/>
            <person name="Comb M.J."/>
        </authorList>
    </citation>
    <scope>METHYLATION [LARGE SCALE ANALYSIS] AT ARG-136</scope>
    <scope>IDENTIFICATION BY MASS SPECTROMETRY [LARGE SCALE ANALYSIS]</scope>
    <source>
        <tissue>Brain</tissue>
    </source>
</reference>
<reference key="8">
    <citation type="journal article" date="2008" name="Biochem. J.">
        <title>The Hsp40 family chaperone protein DnaJB6 enhances Schlafen1 nuclear localization which is critical for promotion of cell-cycle arrest in T-cells.</title>
        <authorList>
            <person name="Zhang Y."/>
            <person name="Yang Z."/>
            <person name="Cao Y."/>
            <person name="Zhang S."/>
            <person name="Li H."/>
            <person name="Huang Y."/>
            <person name="Ding Y.Q."/>
            <person name="Liu X."/>
        </authorList>
    </citation>
    <scope>FUNCTION</scope>
    <scope>INTERACTION WITH SLFN1</scope>
</reference>
<organism>
    <name type="scientific">Mus musculus</name>
    <name type="common">Mouse</name>
    <dbReference type="NCBI Taxonomy" id="10090"/>
    <lineage>
        <taxon>Eukaryota</taxon>
        <taxon>Metazoa</taxon>
        <taxon>Chordata</taxon>
        <taxon>Craniata</taxon>
        <taxon>Vertebrata</taxon>
        <taxon>Euteleostomi</taxon>
        <taxon>Mammalia</taxon>
        <taxon>Eutheria</taxon>
        <taxon>Euarchontoglires</taxon>
        <taxon>Glires</taxon>
        <taxon>Rodentia</taxon>
        <taxon>Myomorpha</taxon>
        <taxon>Muroidea</taxon>
        <taxon>Muridae</taxon>
        <taxon>Murinae</taxon>
        <taxon>Mus</taxon>
        <taxon>Mus</taxon>
    </lineage>
</organism>
<proteinExistence type="evidence at protein level"/>
<accession>O54946</accession>
<accession>Q3TE94</accession>
<accession>Q3U6L0</accession>
<accession>Q3UNJ5</accession>
<accession>Q3UYT7</accession>
<accession>Q99LA5</accession>
<accession>Q9QYI9</accession>
<feature type="chain" id="PRO_0000071026" description="DnaJ homolog subfamily B member 6">
    <location>
        <begin position="1"/>
        <end position="365"/>
    </location>
</feature>
<feature type="domain" description="J" evidence="2">
    <location>
        <begin position="3"/>
        <end position="69"/>
    </location>
</feature>
<feature type="region of interest" description="Interaction with HSP70" evidence="1">
    <location>
        <begin position="2"/>
        <end position="147"/>
    </location>
</feature>
<feature type="region of interest" description="Interaction with KRT18" evidence="1">
    <location>
        <begin position="120"/>
        <end position="243"/>
    </location>
</feature>
<feature type="region of interest" description="Disordered" evidence="3">
    <location>
        <begin position="243"/>
        <end position="365"/>
    </location>
</feature>
<feature type="compositionally biased region" description="Pro residues" evidence="3">
    <location>
        <begin position="252"/>
        <end position="262"/>
    </location>
</feature>
<feature type="compositionally biased region" description="Pro residues" evidence="3">
    <location>
        <begin position="272"/>
        <end position="290"/>
    </location>
</feature>
<feature type="modified residue" description="Omega-N-methylarginine" evidence="11">
    <location>
        <position position="136"/>
    </location>
</feature>
<feature type="splice variant" id="VSP_026212" description="In isoform B." evidence="6 7 8 9">
    <original>VADENALAEE</original>
    <variation>KEHLLRLDNK</variation>
    <location>
        <begin position="233"/>
        <end position="242"/>
    </location>
</feature>
<feature type="splice variant" id="VSP_026213" description="In isoform B." evidence="6 7 8 9">
    <location>
        <begin position="243"/>
        <end position="365"/>
    </location>
</feature>
<feature type="sequence conflict" description="In Ref. 3; BAE41354." evidence="10" ref="3">
    <location>
        <position position="117"/>
    </location>
</feature>
<feature type="sequence conflict" description="In Ref. 2; AAC16759." evidence="10" ref="2">
    <original>GS</original>
    <variation>AP</variation>
    <location>
        <begin position="139"/>
        <end position="140"/>
    </location>
</feature>
<feature type="sequence conflict" description="In Ref. 3; BAE25752." evidence="10" ref="3">
    <location>
        <begin position="188"/>
        <end position="189"/>
    </location>
</feature>
<feature type="sequence conflict" description="In Ref. 4; AAH03702." evidence="10" ref="4">
    <original>E</original>
    <variation>V</variation>
    <location>
        <position position="218"/>
    </location>
</feature>
<feature type="sequence conflict" description="In Ref. 2; AAC16759." evidence="10" ref="2">
    <original>S</original>
    <variation>P</variation>
    <location>
        <position position="227"/>
    </location>
</feature>
<comment type="function">
    <text evidence="1 5">Has a stimulatory effect on the ATPase activity of HSP70 in a dose-dependent and time-dependent manner and hence acts as a co-chaperone of HSP70 (PubMed:18373498). Plays an indispensable role in the organization of KRT8/KRT18 filaments. Acts as an endogenous molecular chaperone for neuronal proteins including huntingtin. Suppresses aggregation and toxicity of polyglutamine-containing, aggregation-prone proteins. Also reduces cellular toxicity and caspase-3 activity (By similarity).</text>
</comment>
<comment type="subunit">
    <text evidence="1 4 5">Homooligomer. Interacts with BAG3, HSPB8 and STUB1 (By similarity). Interacts with ALKBH1 (PubMed:18163532). Interacts with HSP70, KRT18 and PTTG (By similarity). Interacts with Slfn1; promoting nuclear translocation of Slfn1 (PubMed:18373498).</text>
</comment>
<comment type="interaction">
    <interactant intactId="EBI-642500">
        <id>O54946</id>
    </interactant>
    <interactant intactId="EBI-641778">
        <id>Q8BWG8</id>
        <label>Arrb1</label>
    </interactant>
    <organismsDiffer>false</organismsDiffer>
    <experiments>6</experiments>
</comment>
<comment type="interaction">
    <interactant intactId="EBI-13941040">
        <id>O54946-2</id>
    </interactant>
    <interactant intactId="EBI-13941048">
        <id>P0CB42</id>
        <label>Alkbh1</label>
    </interactant>
    <organismsDiffer>false</organismsDiffer>
    <experiments>2</experiments>
</comment>
<comment type="interaction">
    <interactant intactId="EBI-13941040">
        <id>O54946-2</id>
    </interactant>
    <interactant intactId="EBI-308629">
        <id>P56524</id>
        <label>HDAC4</label>
    </interactant>
    <organismsDiffer>true</organismsDiffer>
    <experiments>2</experiments>
</comment>
<comment type="subcellular location">
    <subcellularLocation>
        <location evidence="1">Cytoplasm</location>
        <location evidence="1">Perinuclear region</location>
    </subcellularLocation>
    <subcellularLocation>
        <location evidence="1">Nucleus</location>
    </subcellularLocation>
    <subcellularLocation>
        <location evidence="1">Cytoplasm</location>
        <location evidence="1">Myofibril</location>
        <location evidence="1">Sarcomere</location>
        <location evidence="1">Z line</location>
    </subcellularLocation>
</comment>
<comment type="alternative products">
    <event type="alternative splicing"/>
    <isoform>
        <id>O54946-1</id>
        <name>A</name>
        <sequence type="displayed"/>
    </isoform>
    <isoform>
        <id>O54946-2</id>
        <name>B</name>
        <sequence type="described" ref="VSP_026212 VSP_026213"/>
    </isoform>
</comment>
<dbReference type="EMBL" id="AB028854">
    <property type="protein sequence ID" value="BAA88302.1"/>
    <property type="molecule type" value="mRNA"/>
</dbReference>
<dbReference type="EMBL" id="AF035962">
    <property type="protein sequence ID" value="AAC16759.1"/>
    <property type="molecule type" value="mRNA"/>
</dbReference>
<dbReference type="EMBL" id="AK133805">
    <property type="protein sequence ID" value="BAE21853.1"/>
    <property type="molecule type" value="mRNA"/>
</dbReference>
<dbReference type="EMBL" id="AK134387">
    <property type="protein sequence ID" value="BAE22124.1"/>
    <property type="molecule type" value="mRNA"/>
</dbReference>
<dbReference type="EMBL" id="AK144182">
    <property type="protein sequence ID" value="BAE25752.1"/>
    <property type="molecule type" value="mRNA"/>
</dbReference>
<dbReference type="EMBL" id="AK151219">
    <property type="protein sequence ID" value="BAE30213.1"/>
    <property type="molecule type" value="mRNA"/>
</dbReference>
<dbReference type="EMBL" id="AK151752">
    <property type="protein sequence ID" value="BAE30661.1"/>
    <property type="molecule type" value="mRNA"/>
</dbReference>
<dbReference type="EMBL" id="AK152626">
    <property type="protein sequence ID" value="BAE31369.1"/>
    <property type="molecule type" value="mRNA"/>
</dbReference>
<dbReference type="EMBL" id="AK152632">
    <property type="protein sequence ID" value="BAE31375.1"/>
    <property type="molecule type" value="mRNA"/>
</dbReference>
<dbReference type="EMBL" id="AK153091">
    <property type="protein sequence ID" value="BAE31714.1"/>
    <property type="molecule type" value="mRNA"/>
</dbReference>
<dbReference type="EMBL" id="AK169332">
    <property type="protein sequence ID" value="BAE41085.1"/>
    <property type="molecule type" value="mRNA"/>
</dbReference>
<dbReference type="EMBL" id="AK169767">
    <property type="protein sequence ID" value="BAE41354.1"/>
    <property type="molecule type" value="mRNA"/>
</dbReference>
<dbReference type="EMBL" id="BC003702">
    <property type="protein sequence ID" value="AAH03702.1"/>
    <property type="molecule type" value="mRNA"/>
</dbReference>
<dbReference type="EMBL" id="BC083349">
    <property type="protein sequence ID" value="AAH83349.1"/>
    <property type="molecule type" value="mRNA"/>
</dbReference>
<dbReference type="CCDS" id="CCDS19151.1">
    <molecule id="O54946-1"/>
</dbReference>
<dbReference type="CCDS" id="CCDS39043.1">
    <molecule id="O54946-2"/>
</dbReference>
<dbReference type="RefSeq" id="NP_001033029.1">
    <molecule id="O54946-1"/>
    <property type="nucleotide sequence ID" value="NM_001037940.4"/>
</dbReference>
<dbReference type="RefSeq" id="NP_001120839.1">
    <property type="nucleotide sequence ID" value="NM_001127367.1"/>
</dbReference>
<dbReference type="RefSeq" id="NP_035977.2">
    <molecule id="O54946-2"/>
    <property type="nucleotide sequence ID" value="NM_011847.4"/>
</dbReference>
<dbReference type="SMR" id="O54946"/>
<dbReference type="BioGRID" id="204812">
    <property type="interactions" value="17"/>
</dbReference>
<dbReference type="FunCoup" id="O54946">
    <property type="interactions" value="3335"/>
</dbReference>
<dbReference type="IntAct" id="O54946">
    <property type="interactions" value="7"/>
</dbReference>
<dbReference type="MINT" id="O54946"/>
<dbReference type="STRING" id="10090.ENSMUSP00000008733"/>
<dbReference type="GlyGen" id="O54946">
    <property type="glycosylation" value="3 sites"/>
</dbReference>
<dbReference type="iPTMnet" id="O54946"/>
<dbReference type="PhosphoSitePlus" id="O54946"/>
<dbReference type="SwissPalm" id="O54946"/>
<dbReference type="jPOST" id="O54946"/>
<dbReference type="PaxDb" id="10090-ENSMUSP00000008733"/>
<dbReference type="PeptideAtlas" id="O54946"/>
<dbReference type="ProteomicsDB" id="277479">
    <molecule id="O54946-1"/>
</dbReference>
<dbReference type="ProteomicsDB" id="277480">
    <molecule id="O54946-2"/>
</dbReference>
<dbReference type="Pumba" id="O54946"/>
<dbReference type="Antibodypedia" id="3316">
    <property type="antibodies" value="330 antibodies from 31 providers"/>
</dbReference>
<dbReference type="DNASU" id="23950"/>
<dbReference type="Ensembl" id="ENSMUST00000008733.15">
    <molecule id="O54946-1"/>
    <property type="protein sequence ID" value="ENSMUSP00000008733.9"/>
    <property type="gene ID" value="ENSMUSG00000029131.15"/>
</dbReference>
<dbReference type="Ensembl" id="ENSMUST00000114839.8">
    <molecule id="O54946-2"/>
    <property type="protein sequence ID" value="ENSMUSP00000110488.2"/>
    <property type="gene ID" value="ENSMUSG00000029131.15"/>
</dbReference>
<dbReference type="GeneID" id="23950"/>
<dbReference type="KEGG" id="mmu:23950"/>
<dbReference type="UCSC" id="uc008wup.2">
    <molecule id="O54946-2"/>
    <property type="organism name" value="mouse"/>
</dbReference>
<dbReference type="UCSC" id="uc008wur.2">
    <molecule id="O54946-1"/>
    <property type="organism name" value="mouse"/>
</dbReference>
<dbReference type="AGR" id="MGI:1344381"/>
<dbReference type="CTD" id="10049"/>
<dbReference type="MGI" id="MGI:1344381">
    <property type="gene designation" value="Dnajb6"/>
</dbReference>
<dbReference type="VEuPathDB" id="HostDB:ENSMUSG00000029131"/>
<dbReference type="eggNOG" id="KOG0714">
    <property type="taxonomic scope" value="Eukaryota"/>
</dbReference>
<dbReference type="GeneTree" id="ENSGT00940000154205"/>
<dbReference type="HOGENOM" id="CLU_017633_12_0_1"/>
<dbReference type="InParanoid" id="O54946"/>
<dbReference type="OMA" id="APRHFPW"/>
<dbReference type="OrthoDB" id="10250354at2759"/>
<dbReference type="PhylomeDB" id="O54946"/>
<dbReference type="TreeFam" id="TF105142"/>
<dbReference type="Reactome" id="R-MMU-3371453">
    <property type="pathway name" value="Regulation of HSF1-mediated heat shock response"/>
</dbReference>
<dbReference type="BioGRID-ORCS" id="23950">
    <property type="hits" value="7 hits in 45 CRISPR screens"/>
</dbReference>
<dbReference type="CD-CODE" id="CE726F99">
    <property type="entry name" value="Postsynaptic density"/>
</dbReference>
<dbReference type="ChiTaRS" id="Dnajb6">
    <property type="organism name" value="mouse"/>
</dbReference>
<dbReference type="PRO" id="PR:O54946"/>
<dbReference type="Proteomes" id="UP000000589">
    <property type="component" value="Chromosome 5"/>
</dbReference>
<dbReference type="RNAct" id="O54946">
    <property type="molecule type" value="protein"/>
</dbReference>
<dbReference type="Bgee" id="ENSMUSG00000029131">
    <property type="expression patterns" value="Expressed in animal zygote and 169 other cell types or tissues"/>
</dbReference>
<dbReference type="ExpressionAtlas" id="O54946">
    <property type="expression patterns" value="baseline and differential"/>
</dbReference>
<dbReference type="GO" id="GO:0005737">
    <property type="term" value="C:cytoplasm"/>
    <property type="evidence" value="ECO:0000314"/>
    <property type="project" value="MGI"/>
</dbReference>
<dbReference type="GO" id="GO:0005829">
    <property type="term" value="C:cytosol"/>
    <property type="evidence" value="ECO:0007669"/>
    <property type="project" value="Ensembl"/>
</dbReference>
<dbReference type="GO" id="GO:0005654">
    <property type="term" value="C:nucleoplasm"/>
    <property type="evidence" value="ECO:0007669"/>
    <property type="project" value="Ensembl"/>
</dbReference>
<dbReference type="GO" id="GO:0005634">
    <property type="term" value="C:nucleus"/>
    <property type="evidence" value="ECO:0000314"/>
    <property type="project" value="MGI"/>
</dbReference>
<dbReference type="GO" id="GO:0048471">
    <property type="term" value="C:perinuclear region of cytoplasm"/>
    <property type="evidence" value="ECO:0007669"/>
    <property type="project" value="UniProtKB-SubCell"/>
</dbReference>
<dbReference type="GO" id="GO:0030018">
    <property type="term" value="C:Z disc"/>
    <property type="evidence" value="ECO:0007669"/>
    <property type="project" value="UniProtKB-SubCell"/>
</dbReference>
<dbReference type="GO" id="GO:0001671">
    <property type="term" value="F:ATPase activator activity"/>
    <property type="evidence" value="ECO:0007669"/>
    <property type="project" value="Ensembl"/>
</dbReference>
<dbReference type="GO" id="GO:0003677">
    <property type="term" value="F:DNA binding"/>
    <property type="evidence" value="ECO:0000314"/>
    <property type="project" value="MGI"/>
</dbReference>
<dbReference type="GO" id="GO:0030544">
    <property type="term" value="F:Hsp70 protein binding"/>
    <property type="evidence" value="ECO:0007669"/>
    <property type="project" value="InterPro"/>
</dbReference>
<dbReference type="GO" id="GO:0044183">
    <property type="term" value="F:protein folding chaperone"/>
    <property type="evidence" value="ECO:0000266"/>
    <property type="project" value="MGI"/>
</dbReference>
<dbReference type="GO" id="GO:0051082">
    <property type="term" value="F:unfolded protein binding"/>
    <property type="evidence" value="ECO:0007669"/>
    <property type="project" value="Ensembl"/>
</dbReference>
<dbReference type="GO" id="GO:0030036">
    <property type="term" value="P:actin cytoskeleton organization"/>
    <property type="evidence" value="ECO:0000315"/>
    <property type="project" value="MGI"/>
</dbReference>
<dbReference type="GO" id="GO:0061077">
    <property type="term" value="P:chaperone-mediated protein folding"/>
    <property type="evidence" value="ECO:0000266"/>
    <property type="project" value="MGI"/>
</dbReference>
<dbReference type="GO" id="GO:0060710">
    <property type="term" value="P:chorio-allantoic fusion"/>
    <property type="evidence" value="ECO:0000315"/>
    <property type="project" value="MGI"/>
</dbReference>
<dbReference type="GO" id="GO:0060717">
    <property type="term" value="P:chorion development"/>
    <property type="evidence" value="ECO:0000315"/>
    <property type="project" value="MGI"/>
</dbReference>
<dbReference type="GO" id="GO:0030198">
    <property type="term" value="P:extracellular matrix organization"/>
    <property type="evidence" value="ECO:0000315"/>
    <property type="project" value="MGI"/>
</dbReference>
<dbReference type="GO" id="GO:0045109">
    <property type="term" value="P:intermediate filament organization"/>
    <property type="evidence" value="ECO:0007669"/>
    <property type="project" value="Ensembl"/>
</dbReference>
<dbReference type="GO" id="GO:0045892">
    <property type="term" value="P:negative regulation of DNA-templated transcription"/>
    <property type="evidence" value="ECO:0000314"/>
    <property type="project" value="MGI"/>
</dbReference>
<dbReference type="GO" id="GO:0090084">
    <property type="term" value="P:negative regulation of inclusion body assembly"/>
    <property type="evidence" value="ECO:0007669"/>
    <property type="project" value="Ensembl"/>
</dbReference>
<dbReference type="GO" id="GO:0050877">
    <property type="term" value="P:nervous system process"/>
    <property type="evidence" value="ECO:0007669"/>
    <property type="project" value="Ensembl"/>
</dbReference>
<dbReference type="GO" id="GO:0034504">
    <property type="term" value="P:protein localization to nucleus"/>
    <property type="evidence" value="ECO:0000315"/>
    <property type="project" value="MGI"/>
</dbReference>
<dbReference type="GO" id="GO:0032880">
    <property type="term" value="P:regulation of protein localization"/>
    <property type="evidence" value="ECO:0007669"/>
    <property type="project" value="Ensembl"/>
</dbReference>
<dbReference type="GO" id="GO:0060715">
    <property type="term" value="P:syncytiotrophoblast cell differentiation involved in labyrinthine layer development"/>
    <property type="evidence" value="ECO:0000315"/>
    <property type="project" value="MGI"/>
</dbReference>
<dbReference type="CDD" id="cd06257">
    <property type="entry name" value="DnaJ"/>
    <property type="match status" value="1"/>
</dbReference>
<dbReference type="FunFam" id="1.10.287.110:FF:000022">
    <property type="entry name" value="DnaJ homolog subfamily B member 6"/>
    <property type="match status" value="1"/>
</dbReference>
<dbReference type="Gene3D" id="1.10.287.110">
    <property type="entry name" value="DnaJ domain"/>
    <property type="match status" value="1"/>
</dbReference>
<dbReference type="InterPro" id="IPR001623">
    <property type="entry name" value="DnaJ_domain"/>
</dbReference>
<dbReference type="InterPro" id="IPR018253">
    <property type="entry name" value="DnaJ_domain_CS"/>
</dbReference>
<dbReference type="InterPro" id="IPR043183">
    <property type="entry name" value="DNJB2/6-like"/>
</dbReference>
<dbReference type="InterPro" id="IPR036869">
    <property type="entry name" value="J_dom_sf"/>
</dbReference>
<dbReference type="PANTHER" id="PTHR45168">
    <property type="entry name" value="DNAJ HOMOLOG SUBFAMILY B MEMBER 2"/>
    <property type="match status" value="1"/>
</dbReference>
<dbReference type="PANTHER" id="PTHR45168:SF4">
    <property type="entry name" value="SIMILAR TO DNAJ HOMOLOG SUBFAMILY B MEMBER 6 (HEAT SHOCK PROTEIN J2) (HSJ-2) (MRJ) (MDJ4)"/>
    <property type="match status" value="1"/>
</dbReference>
<dbReference type="Pfam" id="PF00226">
    <property type="entry name" value="DnaJ"/>
    <property type="match status" value="1"/>
</dbReference>
<dbReference type="PRINTS" id="PR00625">
    <property type="entry name" value="JDOMAIN"/>
</dbReference>
<dbReference type="SMART" id="SM00271">
    <property type="entry name" value="DnaJ"/>
    <property type="match status" value="1"/>
</dbReference>
<dbReference type="SUPFAM" id="SSF46565">
    <property type="entry name" value="Chaperone J-domain"/>
    <property type="match status" value="1"/>
</dbReference>
<dbReference type="PROSITE" id="PS00636">
    <property type="entry name" value="DNAJ_1"/>
    <property type="match status" value="1"/>
</dbReference>
<dbReference type="PROSITE" id="PS50076">
    <property type="entry name" value="DNAJ_2"/>
    <property type="match status" value="1"/>
</dbReference>
<sequence>MVDYYEVLGVQRHASPEDIKKAYRKQALKWHPDKNPENKEEAERKFKQVAEAYEVLSDAKKRDIYDKYGKEGLNGGGGGGGIHFDSPFEFGFTFRNPDDVFREFFGGRDPFSFDFFEDPFDDFFGNRRGPRGNRSRGAGSFFSTFSGFPSFGSGFPAFDTGFTPFGSLGHGGLTSFSSTSFGGSGMGNFKSISTSTKIVNGKKITTKRIVENGQERVEVEEDGQLKSLTINGVADENALAEECQRRGQPTPALAPGPAPAPVRVPSQARPLAPTPAPTPAPTPAPAPAQTPAPSVSTRPQKPPRPAPTAKLGSKSNWEDDEQDRQRVPGNWDAPMTSAGLKEGGKRKKQKQKEDLKKKKSTKGNH</sequence>
<evidence type="ECO:0000250" key="1">
    <source>
        <dbReference type="UniProtKB" id="O75190"/>
    </source>
</evidence>
<evidence type="ECO:0000255" key="2">
    <source>
        <dbReference type="PROSITE-ProRule" id="PRU00286"/>
    </source>
</evidence>
<evidence type="ECO:0000256" key="3">
    <source>
        <dbReference type="SAM" id="MobiDB-lite"/>
    </source>
</evidence>
<evidence type="ECO:0000269" key="4">
    <source>
    </source>
</evidence>
<evidence type="ECO:0000269" key="5">
    <source>
    </source>
</evidence>
<evidence type="ECO:0000303" key="6">
    <source>
    </source>
</evidence>
<evidence type="ECO:0000303" key="7">
    <source>
    </source>
</evidence>
<evidence type="ECO:0000303" key="8">
    <source>
    </source>
</evidence>
<evidence type="ECO:0000303" key="9">
    <source ref="2"/>
</evidence>
<evidence type="ECO:0000305" key="10"/>
<evidence type="ECO:0007744" key="11">
    <source>
    </source>
</evidence>
<protein>
    <recommendedName>
        <fullName>DnaJ homolog subfamily B member 6</fullName>
    </recommendedName>
    <alternativeName>
        <fullName>Heat shock protein J2</fullName>
        <shortName>HSJ-2</shortName>
    </alternativeName>
    <alternativeName>
        <fullName>MRJ</fullName>
    </alternativeName>
    <alternativeName>
        <fullName>mDj4</fullName>
    </alternativeName>
</protein>